<organism>
    <name type="scientific">Chironomus thummi thummi</name>
    <name type="common">Midge</name>
    <dbReference type="NCBI Taxonomy" id="7155"/>
    <lineage>
        <taxon>Eukaryota</taxon>
        <taxon>Metazoa</taxon>
        <taxon>Ecdysozoa</taxon>
        <taxon>Arthropoda</taxon>
        <taxon>Hexapoda</taxon>
        <taxon>Insecta</taxon>
        <taxon>Pterygota</taxon>
        <taxon>Neoptera</taxon>
        <taxon>Endopterygota</taxon>
        <taxon>Diptera</taxon>
        <taxon>Nematocera</taxon>
        <taxon>Chironomoidea</taxon>
        <taxon>Chironomidae</taxon>
        <taxon>Chironominae</taxon>
        <taxon>Chironomus</taxon>
    </lineage>
</organism>
<accession>P02228</accession>
<proteinExistence type="evidence at protein level"/>
<protein>
    <recommendedName>
        <fullName>Globin CTT-X</fullName>
    </recommendedName>
</protein>
<dbReference type="PIR" id="A02550">
    <property type="entry name" value="GGICEX"/>
</dbReference>
<dbReference type="PIR" id="A61341">
    <property type="entry name" value="A61341"/>
</dbReference>
<dbReference type="SMR" id="P02228"/>
<dbReference type="Allergome" id="214">
    <property type="allergen name" value="Chi t 9"/>
</dbReference>
<dbReference type="Allergome" id="3197">
    <property type="allergen name" value="Chi t 9.0101"/>
</dbReference>
<dbReference type="GO" id="GO:0005576">
    <property type="term" value="C:extracellular region"/>
    <property type="evidence" value="ECO:0007669"/>
    <property type="project" value="InterPro"/>
</dbReference>
<dbReference type="GO" id="GO:0005833">
    <property type="term" value="C:hemoglobin complex"/>
    <property type="evidence" value="ECO:0007669"/>
    <property type="project" value="InterPro"/>
</dbReference>
<dbReference type="GO" id="GO:0020037">
    <property type="term" value="F:heme binding"/>
    <property type="evidence" value="ECO:0007669"/>
    <property type="project" value="InterPro"/>
</dbReference>
<dbReference type="GO" id="GO:0046872">
    <property type="term" value="F:metal ion binding"/>
    <property type="evidence" value="ECO:0007669"/>
    <property type="project" value="UniProtKB-KW"/>
</dbReference>
<dbReference type="GO" id="GO:0019825">
    <property type="term" value="F:oxygen binding"/>
    <property type="evidence" value="ECO:0007669"/>
    <property type="project" value="InterPro"/>
</dbReference>
<dbReference type="GO" id="GO:0005344">
    <property type="term" value="F:oxygen carrier activity"/>
    <property type="evidence" value="ECO:0007669"/>
    <property type="project" value="UniProtKB-KW"/>
</dbReference>
<dbReference type="CDD" id="cd01040">
    <property type="entry name" value="Mb-like"/>
    <property type="match status" value="1"/>
</dbReference>
<dbReference type="Gene3D" id="1.10.490.10">
    <property type="entry name" value="Globins"/>
    <property type="match status" value="1"/>
</dbReference>
<dbReference type="InterPro" id="IPR002336">
    <property type="entry name" value="Erythrocruorin"/>
</dbReference>
<dbReference type="InterPro" id="IPR000971">
    <property type="entry name" value="Globin"/>
</dbReference>
<dbReference type="InterPro" id="IPR009050">
    <property type="entry name" value="Globin-like_sf"/>
</dbReference>
<dbReference type="InterPro" id="IPR012292">
    <property type="entry name" value="Globin/Proto"/>
</dbReference>
<dbReference type="InterPro" id="IPR044399">
    <property type="entry name" value="Mb-like_M"/>
</dbReference>
<dbReference type="PANTHER" id="PTHR47217">
    <property type="entry name" value="GLOBIN-LIKE PROTEIN"/>
    <property type="match status" value="1"/>
</dbReference>
<dbReference type="PANTHER" id="PTHR47217:SF1">
    <property type="entry name" value="GLOBIN-LIKE PROTEIN"/>
    <property type="match status" value="1"/>
</dbReference>
<dbReference type="Pfam" id="PF00042">
    <property type="entry name" value="Globin"/>
    <property type="match status" value="1"/>
</dbReference>
<dbReference type="PRINTS" id="PR00611">
    <property type="entry name" value="ERYTHCRUORIN"/>
</dbReference>
<dbReference type="SUPFAM" id="SSF46458">
    <property type="entry name" value="Globin-like"/>
    <property type="match status" value="1"/>
</dbReference>
<dbReference type="PROSITE" id="PS01033">
    <property type="entry name" value="GLOBIN"/>
    <property type="match status" value="1"/>
</dbReference>
<gene>
    <name type="primary">CTT-10</name>
</gene>
<sequence length="151" mass="17068">DPEWHTLDAHEVEQVQATWKAVSHDEVEILYTVFKAHPDIMAKFPKFAGKDLEAIKDTADFAVHASRIIGFFGEYVTLLGSSGNQAAIRTLLHDLGVFHKTRGITKAQFGEFRETMTAYLKGHNKWNADISHSWDDAFDKAFSVIFEVLES</sequence>
<reference key="1">
    <citation type="journal article" date="1979" name="Hoppe-Seyler's Z. Physiol. Chem.">
        <title>The primary structure of one of the dimeric hemoglobin (erythrocruorin) components, CTT-X, of Chironomus thummi thummi (Diptera).</title>
        <authorList>
            <person name="Lalthantluanga R."/>
            <person name="Braunitzer G."/>
        </authorList>
    </citation>
    <scope>PROTEIN SEQUENCE</scope>
</reference>
<evidence type="ECO:0000255" key="1">
    <source>
        <dbReference type="PROSITE-ProRule" id="PRU00238"/>
    </source>
</evidence>
<comment type="subunit">
    <text>Homodimer.</text>
</comment>
<comment type="miscellaneous">
    <text>There are at least 12 different components in Midge globin.</text>
</comment>
<comment type="similarity">
    <text evidence="1">Belongs to the globin family.</text>
</comment>
<feature type="chain" id="PRO_0000052470" description="Globin CTT-X">
    <location>
        <begin position="1"/>
        <end position="151"/>
    </location>
</feature>
<feature type="domain" description="Globin" evidence="1">
    <location>
        <begin position="6"/>
        <end position="150"/>
    </location>
</feature>
<feature type="binding site" description="distal binding residue" evidence="1">
    <location>
        <position position="64"/>
    </location>
    <ligand>
        <name>heme b</name>
        <dbReference type="ChEBI" id="CHEBI:60344"/>
    </ligand>
    <ligandPart>
        <name>Fe</name>
        <dbReference type="ChEBI" id="CHEBI:18248"/>
    </ligandPart>
</feature>
<feature type="binding site" description="proximal binding residue" evidence="1">
    <location>
        <position position="99"/>
    </location>
    <ligand>
        <name>heme b</name>
        <dbReference type="ChEBI" id="CHEBI:60344"/>
    </ligand>
    <ligandPart>
        <name>Fe</name>
        <dbReference type="ChEBI" id="CHEBI:18248"/>
    </ligandPart>
</feature>
<feature type="sequence variant" description="In second component.">
    <original>A</original>
    <variation>T</variation>
    <location>
        <position position="48"/>
    </location>
</feature>
<keyword id="KW-0903">Direct protein sequencing</keyword>
<keyword id="KW-0349">Heme</keyword>
<keyword id="KW-0408">Iron</keyword>
<keyword id="KW-0479">Metal-binding</keyword>
<keyword id="KW-0561">Oxygen transport</keyword>
<keyword id="KW-0813">Transport</keyword>
<name>GLB10_CHITH</name>